<dbReference type="EC" id="3.1.1.31" evidence="1"/>
<dbReference type="EMBL" id="AP008232">
    <property type="protein sequence ID" value="BAE74175.1"/>
    <property type="molecule type" value="Genomic_DNA"/>
</dbReference>
<dbReference type="RefSeq" id="WP_011410761.1">
    <property type="nucleotide sequence ID" value="NC_007712.1"/>
</dbReference>
<dbReference type="SMR" id="Q2NUK0"/>
<dbReference type="STRING" id="343509.SG0900"/>
<dbReference type="KEGG" id="sgl:SG0900"/>
<dbReference type="eggNOG" id="COG2706">
    <property type="taxonomic scope" value="Bacteria"/>
</dbReference>
<dbReference type="HOGENOM" id="CLU_038716_2_0_6"/>
<dbReference type="OrthoDB" id="9790815at2"/>
<dbReference type="BioCyc" id="SGLO343509:SGP1_RS07665-MONOMER"/>
<dbReference type="UniPathway" id="UPA00115">
    <property type="reaction ID" value="UER00409"/>
</dbReference>
<dbReference type="Proteomes" id="UP000001932">
    <property type="component" value="Chromosome"/>
</dbReference>
<dbReference type="GO" id="GO:0005829">
    <property type="term" value="C:cytosol"/>
    <property type="evidence" value="ECO:0007669"/>
    <property type="project" value="TreeGrafter"/>
</dbReference>
<dbReference type="GO" id="GO:0017057">
    <property type="term" value="F:6-phosphogluconolactonase activity"/>
    <property type="evidence" value="ECO:0007669"/>
    <property type="project" value="UniProtKB-UniRule"/>
</dbReference>
<dbReference type="GO" id="GO:0006006">
    <property type="term" value="P:glucose metabolic process"/>
    <property type="evidence" value="ECO:0007669"/>
    <property type="project" value="UniProtKB-KW"/>
</dbReference>
<dbReference type="GO" id="GO:0009051">
    <property type="term" value="P:pentose-phosphate shunt, oxidative branch"/>
    <property type="evidence" value="ECO:0007669"/>
    <property type="project" value="UniProtKB-UniRule"/>
</dbReference>
<dbReference type="Gene3D" id="2.130.10.10">
    <property type="entry name" value="YVTN repeat-like/Quinoprotein amine dehydrogenase"/>
    <property type="match status" value="1"/>
</dbReference>
<dbReference type="HAMAP" id="MF_01605">
    <property type="entry name" value="6P_gluconolactonase"/>
    <property type="match status" value="1"/>
</dbReference>
<dbReference type="InterPro" id="IPR022528">
    <property type="entry name" value="6-phosphogluconolactonase_YbhE"/>
</dbReference>
<dbReference type="InterPro" id="IPR050282">
    <property type="entry name" value="Cycloisomerase_2"/>
</dbReference>
<dbReference type="InterPro" id="IPR019405">
    <property type="entry name" value="Lactonase_7-beta_prop"/>
</dbReference>
<dbReference type="InterPro" id="IPR011045">
    <property type="entry name" value="N2O_reductase_N"/>
</dbReference>
<dbReference type="InterPro" id="IPR015943">
    <property type="entry name" value="WD40/YVTN_repeat-like_dom_sf"/>
</dbReference>
<dbReference type="NCBIfam" id="NF008258">
    <property type="entry name" value="PRK11028.1"/>
    <property type="match status" value="1"/>
</dbReference>
<dbReference type="PANTHER" id="PTHR30344:SF1">
    <property type="entry name" value="6-PHOSPHOGLUCONOLACTONASE"/>
    <property type="match status" value="1"/>
</dbReference>
<dbReference type="PANTHER" id="PTHR30344">
    <property type="entry name" value="6-PHOSPHOGLUCONOLACTONASE-RELATED"/>
    <property type="match status" value="1"/>
</dbReference>
<dbReference type="Pfam" id="PF10282">
    <property type="entry name" value="Lactonase"/>
    <property type="match status" value="1"/>
</dbReference>
<dbReference type="SUPFAM" id="SSF50974">
    <property type="entry name" value="Nitrous oxide reductase, N-terminal domain"/>
    <property type="match status" value="1"/>
</dbReference>
<proteinExistence type="inferred from homology"/>
<feature type="chain" id="PRO_0000291473" description="6-phosphogluconolactonase">
    <location>
        <begin position="1"/>
        <end position="331"/>
    </location>
</feature>
<comment type="function">
    <text evidence="1">Catalyzes the hydrolysis of 6-phosphogluconolactone to 6-phosphogluconate.</text>
</comment>
<comment type="catalytic activity">
    <reaction evidence="1">
        <text>6-phospho-D-glucono-1,5-lactone + H2O = 6-phospho-D-gluconate + H(+)</text>
        <dbReference type="Rhea" id="RHEA:12556"/>
        <dbReference type="ChEBI" id="CHEBI:15377"/>
        <dbReference type="ChEBI" id="CHEBI:15378"/>
        <dbReference type="ChEBI" id="CHEBI:57955"/>
        <dbReference type="ChEBI" id="CHEBI:58759"/>
        <dbReference type="EC" id="3.1.1.31"/>
    </reaction>
</comment>
<comment type="pathway">
    <text evidence="1">Carbohydrate degradation; pentose phosphate pathway; D-ribulose 5-phosphate from D-glucose 6-phosphate (oxidative stage): step 2/3.</text>
</comment>
<comment type="similarity">
    <text evidence="1">Belongs to the cycloisomerase 2 family.</text>
</comment>
<name>6PGL_SODGM</name>
<keyword id="KW-0119">Carbohydrate metabolism</keyword>
<keyword id="KW-0313">Glucose metabolism</keyword>
<keyword id="KW-0378">Hydrolase</keyword>
<gene>
    <name evidence="1" type="primary">pgl</name>
    <name type="ordered locus">SG0900</name>
</gene>
<accession>Q2NUK0</accession>
<evidence type="ECO:0000255" key="1">
    <source>
        <dbReference type="HAMAP-Rule" id="MF_01605"/>
    </source>
</evidence>
<protein>
    <recommendedName>
        <fullName evidence="1">6-phosphogluconolactonase</fullName>
        <shortName evidence="1">6-P-gluconolactonase</shortName>
        <ecNumber evidence="1">3.1.1.31</ecNumber>
    </recommendedName>
</protein>
<sequence>MKQIVYVASPESQQIHVWQMDNQGALTLLQVVDTPGQGQPMVIHPARTHLYIGVRPSFGVVSYRIDEKGLLTEAGMAPLPGSPTQLTTDLQGETLYSVSYSGSCLSVSPIDEQGIVGAPTQTLEGLTHCHSANVDTTNQVLWVPCLQEDRIRLYTIGEAGHLTPRTPEALDSVAGAGPRHMVFHHGGGYAYAINELSGTVNVIAIDAAGAGPRIVQTLDIMPAGFSDTRWAADIYITPDGRWLYCCDRTASVISRFAVSEDGGVLRLLGHQATESQPRGFNIDSQGRFLVAAGQKSHHIAVYAIDAQSGALDPLARYAVGQGPMWVSVLAR</sequence>
<reference key="1">
    <citation type="journal article" date="2006" name="Genome Res.">
        <title>Massive genome erosion and functional adaptations provide insights into the symbiotic lifestyle of Sodalis glossinidius in the tsetse host.</title>
        <authorList>
            <person name="Toh H."/>
            <person name="Weiss B.L."/>
            <person name="Perkin S.A.H."/>
            <person name="Yamashita A."/>
            <person name="Oshima K."/>
            <person name="Hattori M."/>
            <person name="Aksoy S."/>
        </authorList>
    </citation>
    <scope>NUCLEOTIDE SEQUENCE [LARGE SCALE GENOMIC DNA]</scope>
    <source>
        <strain>morsitans</strain>
    </source>
</reference>
<organism>
    <name type="scientific">Sodalis glossinidius (strain morsitans)</name>
    <dbReference type="NCBI Taxonomy" id="343509"/>
    <lineage>
        <taxon>Bacteria</taxon>
        <taxon>Pseudomonadati</taxon>
        <taxon>Pseudomonadota</taxon>
        <taxon>Gammaproteobacteria</taxon>
        <taxon>Enterobacterales</taxon>
        <taxon>Bruguierivoracaceae</taxon>
        <taxon>Sodalis</taxon>
    </lineage>
</organism>